<protein>
    <recommendedName>
        <fullName>P2Y purinoceptor 12</fullName>
        <shortName>P2Y12</shortName>
    </recommendedName>
</protein>
<reference key="1">
    <citation type="journal article" date="2005" name="Science">
        <title>The transcriptional landscape of the mammalian genome.</title>
        <authorList>
            <person name="Carninci P."/>
            <person name="Kasukawa T."/>
            <person name="Katayama S."/>
            <person name="Gough J."/>
            <person name="Frith M.C."/>
            <person name="Maeda N."/>
            <person name="Oyama R."/>
            <person name="Ravasi T."/>
            <person name="Lenhard B."/>
            <person name="Wells C."/>
            <person name="Kodzius R."/>
            <person name="Shimokawa K."/>
            <person name="Bajic V.B."/>
            <person name="Brenner S.E."/>
            <person name="Batalov S."/>
            <person name="Forrest A.R."/>
            <person name="Zavolan M."/>
            <person name="Davis M.J."/>
            <person name="Wilming L.G."/>
            <person name="Aidinis V."/>
            <person name="Allen J.E."/>
            <person name="Ambesi-Impiombato A."/>
            <person name="Apweiler R."/>
            <person name="Aturaliya R.N."/>
            <person name="Bailey T.L."/>
            <person name="Bansal M."/>
            <person name="Baxter L."/>
            <person name="Beisel K.W."/>
            <person name="Bersano T."/>
            <person name="Bono H."/>
            <person name="Chalk A.M."/>
            <person name="Chiu K.P."/>
            <person name="Choudhary V."/>
            <person name="Christoffels A."/>
            <person name="Clutterbuck D.R."/>
            <person name="Crowe M.L."/>
            <person name="Dalla E."/>
            <person name="Dalrymple B.P."/>
            <person name="de Bono B."/>
            <person name="Della Gatta G."/>
            <person name="di Bernardo D."/>
            <person name="Down T."/>
            <person name="Engstrom P."/>
            <person name="Fagiolini M."/>
            <person name="Faulkner G."/>
            <person name="Fletcher C.F."/>
            <person name="Fukushima T."/>
            <person name="Furuno M."/>
            <person name="Futaki S."/>
            <person name="Gariboldi M."/>
            <person name="Georgii-Hemming P."/>
            <person name="Gingeras T.R."/>
            <person name="Gojobori T."/>
            <person name="Green R.E."/>
            <person name="Gustincich S."/>
            <person name="Harbers M."/>
            <person name="Hayashi Y."/>
            <person name="Hensch T.K."/>
            <person name="Hirokawa N."/>
            <person name="Hill D."/>
            <person name="Huminiecki L."/>
            <person name="Iacono M."/>
            <person name="Ikeo K."/>
            <person name="Iwama A."/>
            <person name="Ishikawa T."/>
            <person name="Jakt M."/>
            <person name="Kanapin A."/>
            <person name="Katoh M."/>
            <person name="Kawasawa Y."/>
            <person name="Kelso J."/>
            <person name="Kitamura H."/>
            <person name="Kitano H."/>
            <person name="Kollias G."/>
            <person name="Krishnan S.P."/>
            <person name="Kruger A."/>
            <person name="Kummerfeld S.K."/>
            <person name="Kurochkin I.V."/>
            <person name="Lareau L.F."/>
            <person name="Lazarevic D."/>
            <person name="Lipovich L."/>
            <person name="Liu J."/>
            <person name="Liuni S."/>
            <person name="McWilliam S."/>
            <person name="Madan Babu M."/>
            <person name="Madera M."/>
            <person name="Marchionni L."/>
            <person name="Matsuda H."/>
            <person name="Matsuzawa S."/>
            <person name="Miki H."/>
            <person name="Mignone F."/>
            <person name="Miyake S."/>
            <person name="Morris K."/>
            <person name="Mottagui-Tabar S."/>
            <person name="Mulder N."/>
            <person name="Nakano N."/>
            <person name="Nakauchi H."/>
            <person name="Ng P."/>
            <person name="Nilsson R."/>
            <person name="Nishiguchi S."/>
            <person name="Nishikawa S."/>
            <person name="Nori F."/>
            <person name="Ohara O."/>
            <person name="Okazaki Y."/>
            <person name="Orlando V."/>
            <person name="Pang K.C."/>
            <person name="Pavan W.J."/>
            <person name="Pavesi G."/>
            <person name="Pesole G."/>
            <person name="Petrovsky N."/>
            <person name="Piazza S."/>
            <person name="Reed J."/>
            <person name="Reid J.F."/>
            <person name="Ring B.Z."/>
            <person name="Ringwald M."/>
            <person name="Rost B."/>
            <person name="Ruan Y."/>
            <person name="Salzberg S.L."/>
            <person name="Sandelin A."/>
            <person name="Schneider C."/>
            <person name="Schoenbach C."/>
            <person name="Sekiguchi K."/>
            <person name="Semple C.A."/>
            <person name="Seno S."/>
            <person name="Sessa L."/>
            <person name="Sheng Y."/>
            <person name="Shibata Y."/>
            <person name="Shimada H."/>
            <person name="Shimada K."/>
            <person name="Silva D."/>
            <person name="Sinclair B."/>
            <person name="Sperling S."/>
            <person name="Stupka E."/>
            <person name="Sugiura K."/>
            <person name="Sultana R."/>
            <person name="Takenaka Y."/>
            <person name="Taki K."/>
            <person name="Tammoja K."/>
            <person name="Tan S.L."/>
            <person name="Tang S."/>
            <person name="Taylor M.S."/>
            <person name="Tegner J."/>
            <person name="Teichmann S.A."/>
            <person name="Ueda H.R."/>
            <person name="van Nimwegen E."/>
            <person name="Verardo R."/>
            <person name="Wei C.L."/>
            <person name="Yagi K."/>
            <person name="Yamanishi H."/>
            <person name="Zabarovsky E."/>
            <person name="Zhu S."/>
            <person name="Zimmer A."/>
            <person name="Hide W."/>
            <person name="Bult C."/>
            <person name="Grimmond S.M."/>
            <person name="Teasdale R.D."/>
            <person name="Liu E.T."/>
            <person name="Brusic V."/>
            <person name="Quackenbush J."/>
            <person name="Wahlestedt C."/>
            <person name="Mattick J.S."/>
            <person name="Hume D.A."/>
            <person name="Kai C."/>
            <person name="Sasaki D."/>
            <person name="Tomaru Y."/>
            <person name="Fukuda S."/>
            <person name="Kanamori-Katayama M."/>
            <person name="Suzuki M."/>
            <person name="Aoki J."/>
            <person name="Arakawa T."/>
            <person name="Iida J."/>
            <person name="Imamura K."/>
            <person name="Itoh M."/>
            <person name="Kato T."/>
            <person name="Kawaji H."/>
            <person name="Kawagashira N."/>
            <person name="Kawashima T."/>
            <person name="Kojima M."/>
            <person name="Kondo S."/>
            <person name="Konno H."/>
            <person name="Nakano K."/>
            <person name="Ninomiya N."/>
            <person name="Nishio T."/>
            <person name="Okada M."/>
            <person name="Plessy C."/>
            <person name="Shibata K."/>
            <person name="Shiraki T."/>
            <person name="Suzuki S."/>
            <person name="Tagami M."/>
            <person name="Waki K."/>
            <person name="Watahiki A."/>
            <person name="Okamura-Oho Y."/>
            <person name="Suzuki H."/>
            <person name="Kawai J."/>
            <person name="Hayashizaki Y."/>
        </authorList>
    </citation>
    <scope>NUCLEOTIDE SEQUENCE [LARGE SCALE MRNA]</scope>
    <source>
        <strain>C57BL/6J</strain>
        <tissue>Hippocampus</tissue>
        <tissue>Testis</tissue>
    </source>
</reference>
<reference key="2">
    <citation type="journal article" date="2004" name="Genome Res.">
        <title>The status, quality, and expansion of the NIH full-length cDNA project: the Mammalian Gene Collection (MGC).</title>
        <authorList>
            <consortium name="The MGC Project Team"/>
        </authorList>
    </citation>
    <scope>NUCLEOTIDE SEQUENCE [LARGE SCALE MRNA]</scope>
    <source>
        <strain>FVB/N</strain>
        <tissue>Mammary tumor</tissue>
    </source>
</reference>
<reference key="3">
    <citation type="journal article" date="2003" name="J. Clin. Invest.">
        <title>P2Y12 regulates platelet adhesion/activation, thrombus growth, and thrombus stability in injured arteries.</title>
        <authorList>
            <person name="Andre P."/>
            <person name="Delaney S.M."/>
            <person name="LaRocca T."/>
            <person name="Vincent D."/>
            <person name="DeGuzman F."/>
            <person name="Jurek M."/>
            <person name="Koller B."/>
            <person name="Phillips D.R."/>
            <person name="Conley P.B."/>
        </authorList>
    </citation>
    <scope>FUNCTION</scope>
    <scope>DISRUPTION PHENOTYPE</scope>
</reference>
<reference key="4">
    <citation type="journal article" date="2010" name="Cell">
        <title>A tissue-specific atlas of mouse protein phosphorylation and expression.</title>
        <authorList>
            <person name="Huttlin E.L."/>
            <person name="Jedrychowski M.P."/>
            <person name="Elias J.E."/>
            <person name="Goswami T."/>
            <person name="Rad R."/>
            <person name="Beausoleil S.A."/>
            <person name="Villen J."/>
            <person name="Haas W."/>
            <person name="Sowa M.E."/>
            <person name="Gygi S.P."/>
        </authorList>
    </citation>
    <scope>IDENTIFICATION BY MASS SPECTROMETRY [LARGE SCALE ANALYSIS]</scope>
    <source>
        <tissue>Brain</tissue>
    </source>
</reference>
<comment type="function">
    <text evidence="6">Receptor for ADP and ATP coupled to G-proteins that inhibit the adenylyl cyclase second messenger system. Required for normal platelet aggregation and blood coagulation.</text>
</comment>
<comment type="subcellular location">
    <subcellularLocation>
        <location>Cell membrane</location>
        <topology>Multi-pass membrane protein</topology>
    </subcellularLocation>
</comment>
<comment type="domain">
    <text evidence="1">The transmembrane domain is composed of seven transmembrane helices; most of these are not strictly perpendicular to the plane of the membrane, but are tilted and/or kinked. Agonist binding promotes a conformation change in the extracellular loops that leads to an inward movement of the transmembrane helices. Antagonists can bind to an overlapping site, but block the inward movement of the transmembrane helices (By similarity).</text>
</comment>
<comment type="disruption phenotype">
    <text evidence="6">Mice are viable and fertile, but display impaired blood coagulation, due to defects in platelet aggregation and thrombus formation.</text>
</comment>
<comment type="similarity">
    <text evidence="4">Belongs to the G-protein coupled receptor 1 family.</text>
</comment>
<feature type="chain" id="PRO_0000070038" description="P2Y purinoceptor 12">
    <location>
        <begin position="1"/>
        <end position="347"/>
    </location>
</feature>
<feature type="topological domain" description="Extracellular" evidence="1">
    <location>
        <begin position="1"/>
        <end position="33"/>
    </location>
</feature>
<feature type="transmembrane region" description="Helical; Name=1" evidence="1">
    <location>
        <begin position="34"/>
        <end position="56"/>
    </location>
</feature>
<feature type="topological domain" description="Cytoplasmic" evidence="1">
    <location>
        <begin position="57"/>
        <end position="67"/>
    </location>
</feature>
<feature type="transmembrane region" description="Helical; Name=2" evidence="1">
    <location>
        <begin position="68"/>
        <end position="88"/>
    </location>
</feature>
<feature type="topological domain" description="Extracellular" evidence="1">
    <location>
        <begin position="89"/>
        <end position="103"/>
    </location>
</feature>
<feature type="transmembrane region" description="Helical; Name=3" evidence="1">
    <location>
        <begin position="104"/>
        <end position="124"/>
    </location>
</feature>
<feature type="topological domain" description="Cytoplasmic" evidence="1">
    <location>
        <begin position="125"/>
        <end position="148"/>
    </location>
</feature>
<feature type="transmembrane region" description="Helical; Name=4" evidence="1">
    <location>
        <begin position="149"/>
        <end position="168"/>
    </location>
</feature>
<feature type="topological domain" description="Extracellular" evidence="1">
    <location>
        <begin position="169"/>
        <end position="191"/>
    </location>
</feature>
<feature type="transmembrane region" description="Helical; Name=5" evidence="1">
    <location>
        <begin position="192"/>
        <end position="213"/>
    </location>
</feature>
<feature type="topological domain" description="Cytoplasmic" evidence="1">
    <location>
        <begin position="214"/>
        <end position="239"/>
    </location>
</feature>
<feature type="transmembrane region" description="Helical; Name=6" evidence="1">
    <location>
        <begin position="240"/>
        <end position="265"/>
    </location>
</feature>
<feature type="topological domain" description="Extracellular" evidence="1">
    <location>
        <begin position="266"/>
        <end position="284"/>
    </location>
</feature>
<feature type="transmembrane region" description="Helical; Name=7" evidence="1">
    <location>
        <begin position="285"/>
        <end position="304"/>
    </location>
</feature>
<feature type="topological domain" description="Cytoplasmic" evidence="1">
    <location>
        <begin position="305"/>
        <end position="347"/>
    </location>
</feature>
<feature type="region of interest" description="Disordered" evidence="5">
    <location>
        <begin position="321"/>
        <end position="347"/>
    </location>
</feature>
<feature type="binding site" evidence="1">
    <location>
        <position position="99"/>
    </location>
    <ligand>
        <name>ADP</name>
        <dbReference type="ChEBI" id="CHEBI:456216"/>
    </ligand>
</feature>
<feature type="binding site" evidence="1">
    <location>
        <position position="103"/>
    </location>
    <ligand>
        <name>ADP</name>
        <dbReference type="ChEBI" id="CHEBI:456216"/>
    </ligand>
</feature>
<feature type="binding site" evidence="1">
    <location>
        <position position="111"/>
    </location>
    <ligand>
        <name>ADP</name>
        <dbReference type="ChEBI" id="CHEBI:456216"/>
    </ligand>
</feature>
<feature type="binding site" evidence="1">
    <location>
        <begin position="162"/>
        <end position="165"/>
    </location>
    <ligand>
        <name>ADP</name>
        <dbReference type="ChEBI" id="CHEBI:456216"/>
    </ligand>
</feature>
<feature type="binding site" evidence="1">
    <location>
        <begin position="181"/>
        <end position="185"/>
    </location>
    <ligand>
        <name>ADP</name>
        <dbReference type="ChEBI" id="CHEBI:456216"/>
    </ligand>
</feature>
<feature type="binding site" evidence="1">
    <location>
        <position position="193"/>
    </location>
    <ligand>
        <name>ADP</name>
        <dbReference type="ChEBI" id="CHEBI:456216"/>
    </ligand>
</feature>
<feature type="binding site" evidence="1">
    <location>
        <position position="197"/>
    </location>
    <ligand>
        <name>ADP</name>
        <dbReference type="ChEBI" id="CHEBI:456216"/>
    </ligand>
</feature>
<feature type="binding site" evidence="1">
    <location>
        <begin position="262"/>
        <end position="265"/>
    </location>
    <ligand>
        <name>ADP</name>
        <dbReference type="ChEBI" id="CHEBI:456216"/>
    </ligand>
</feature>
<feature type="binding site" evidence="1">
    <location>
        <position position="269"/>
    </location>
    <ligand>
        <name>ADP</name>
        <dbReference type="ChEBI" id="CHEBI:456216"/>
    </ligand>
</feature>
<feature type="binding site" evidence="1">
    <location>
        <position position="286"/>
    </location>
    <ligand>
        <name>ADP</name>
        <dbReference type="ChEBI" id="CHEBI:456216"/>
    </ligand>
</feature>
<feature type="modified residue" description="Phosphoserine" evidence="2">
    <location>
        <position position="61"/>
    </location>
</feature>
<feature type="modified residue" description="Phosphoserine" evidence="2">
    <location>
        <position position="63"/>
    </location>
</feature>
<feature type="glycosylation site" description="N-linked (GlcNAc...) asparagine" evidence="3">
    <location>
        <position position="7"/>
    </location>
</feature>
<feature type="glycosylation site" description="N-linked (GlcNAc...) asparagine" evidence="3">
    <location>
        <position position="12"/>
    </location>
</feature>
<feature type="disulfide bond" evidence="4">
    <location>
        <begin position="23"/>
        <end position="276"/>
    </location>
</feature>
<feature type="disulfide bond" evidence="4">
    <location>
        <begin position="103"/>
        <end position="181"/>
    </location>
</feature>
<organism>
    <name type="scientific">Mus musculus</name>
    <name type="common">Mouse</name>
    <dbReference type="NCBI Taxonomy" id="10090"/>
    <lineage>
        <taxon>Eukaryota</taxon>
        <taxon>Metazoa</taxon>
        <taxon>Chordata</taxon>
        <taxon>Craniata</taxon>
        <taxon>Vertebrata</taxon>
        <taxon>Euteleostomi</taxon>
        <taxon>Mammalia</taxon>
        <taxon>Eutheria</taxon>
        <taxon>Euarchontoglires</taxon>
        <taxon>Glires</taxon>
        <taxon>Rodentia</taxon>
        <taxon>Myomorpha</taxon>
        <taxon>Muroidea</taxon>
        <taxon>Muridae</taxon>
        <taxon>Murinae</taxon>
        <taxon>Mus</taxon>
        <taxon>Mus</taxon>
    </lineage>
</organism>
<evidence type="ECO:0000250" key="1"/>
<evidence type="ECO:0000250" key="2">
    <source>
        <dbReference type="UniProtKB" id="Q9EPX4"/>
    </source>
</evidence>
<evidence type="ECO:0000255" key="3"/>
<evidence type="ECO:0000255" key="4">
    <source>
        <dbReference type="PROSITE-ProRule" id="PRU00521"/>
    </source>
</evidence>
<evidence type="ECO:0000256" key="5">
    <source>
        <dbReference type="SAM" id="MobiDB-lite"/>
    </source>
</evidence>
<evidence type="ECO:0000269" key="6">
    <source>
    </source>
</evidence>
<proteinExistence type="evidence at protein level"/>
<name>P2Y12_MOUSE</name>
<accession>Q9CPV9</accession>
<sequence length="347" mass="39474">MDVPGVNTTSANTTFSPGTSTLCVRDYKITQVLFPLLYTVLFFAGLITNSLAMRIFFQIRSKSNFIIFLKNTVISDLLMILTFPFKILSDAKLGAGPLRTLVCQVTSVTFYFTMYISISFLGLITIDRYLKTTRPFKTSSPSNLLGAKILSVVIWAFMFLISLPNMILTNRRPKDKDVTKCSFLKSEFGLVWHEIVNYICQVIFWINFLIVIVCYSLITKELYRSYVRTRGSAKVPKKKVNVKVFIIIAVFFICFVPFHFARIPYTLSQTRAVFDCSAENTLFYVKESTLWLTSLNACLDPFIYFFLCKSFRNSLTSMLRCSNSTSTSGTNKKKGQEGGEPSEETPM</sequence>
<dbReference type="EMBL" id="AK013804">
    <property type="protein sequence ID" value="BAB29000.1"/>
    <property type="molecule type" value="mRNA"/>
</dbReference>
<dbReference type="EMBL" id="AK014807">
    <property type="protein sequence ID" value="BAB29561.1"/>
    <property type="molecule type" value="mRNA"/>
</dbReference>
<dbReference type="EMBL" id="BC027381">
    <property type="protein sequence ID" value="AAH27381.1"/>
    <property type="molecule type" value="mRNA"/>
</dbReference>
<dbReference type="CCDS" id="CCDS17373.1"/>
<dbReference type="RefSeq" id="NP_001343936.1">
    <property type="nucleotide sequence ID" value="NM_001357007.1"/>
</dbReference>
<dbReference type="RefSeq" id="NP_001343937.1">
    <property type="nucleotide sequence ID" value="NM_001357008.1"/>
</dbReference>
<dbReference type="RefSeq" id="NP_001343939.1">
    <property type="nucleotide sequence ID" value="NM_001357010.1"/>
</dbReference>
<dbReference type="RefSeq" id="NP_081847.3">
    <property type="nucleotide sequence ID" value="NM_027571.3"/>
</dbReference>
<dbReference type="RefSeq" id="XP_006502146.1">
    <property type="nucleotide sequence ID" value="XM_006502083.3"/>
</dbReference>
<dbReference type="RefSeq" id="XP_006502147.1">
    <property type="nucleotide sequence ID" value="XM_006502084.3"/>
</dbReference>
<dbReference type="RefSeq" id="XP_006502148.1">
    <property type="nucleotide sequence ID" value="XM_006502085.3"/>
</dbReference>
<dbReference type="RefSeq" id="XP_036019203.1">
    <property type="nucleotide sequence ID" value="XM_036163310.1"/>
</dbReference>
<dbReference type="RefSeq" id="XP_036019204.1">
    <property type="nucleotide sequence ID" value="XM_036163311.1"/>
</dbReference>
<dbReference type="SMR" id="Q9CPV9"/>
<dbReference type="FunCoup" id="Q9CPV9">
    <property type="interactions" value="578"/>
</dbReference>
<dbReference type="STRING" id="10090.ENSMUSP00000143036"/>
<dbReference type="GlyCosmos" id="Q9CPV9">
    <property type="glycosylation" value="2 sites, No reported glycans"/>
</dbReference>
<dbReference type="GlyGen" id="Q9CPV9">
    <property type="glycosylation" value="2 sites"/>
</dbReference>
<dbReference type="iPTMnet" id="Q9CPV9"/>
<dbReference type="PhosphoSitePlus" id="Q9CPV9"/>
<dbReference type="SwissPalm" id="Q9CPV9"/>
<dbReference type="jPOST" id="Q9CPV9"/>
<dbReference type="PaxDb" id="10090-ENSMUSP00000051353"/>
<dbReference type="ProteomicsDB" id="294420"/>
<dbReference type="Antibodypedia" id="2951">
    <property type="antibodies" value="222 antibodies from 32 providers"/>
</dbReference>
<dbReference type="DNASU" id="70839"/>
<dbReference type="Ensembl" id="ENSMUST00000050360.14">
    <property type="protein sequence ID" value="ENSMUSP00000051353.8"/>
    <property type="gene ID" value="ENSMUSG00000036353.14"/>
</dbReference>
<dbReference type="Ensembl" id="ENSMUST00000170388.6">
    <property type="protein sequence ID" value="ENSMUSP00000126819.2"/>
    <property type="gene ID" value="ENSMUSG00000036353.14"/>
</dbReference>
<dbReference type="Ensembl" id="ENSMUST00000196583.5">
    <property type="protein sequence ID" value="ENSMUSP00000143036.2"/>
    <property type="gene ID" value="ENSMUSG00000036353.14"/>
</dbReference>
<dbReference type="Ensembl" id="ENSMUST00000199609.2">
    <property type="protein sequence ID" value="ENSMUSP00000143521.2"/>
    <property type="gene ID" value="ENSMUSG00000036353.14"/>
</dbReference>
<dbReference type="GeneID" id="70839"/>
<dbReference type="KEGG" id="mmu:70839"/>
<dbReference type="UCSC" id="uc008pir.2">
    <property type="organism name" value="mouse"/>
</dbReference>
<dbReference type="AGR" id="MGI:1918089"/>
<dbReference type="CTD" id="64805"/>
<dbReference type="MGI" id="MGI:1918089">
    <property type="gene designation" value="P2ry12"/>
</dbReference>
<dbReference type="VEuPathDB" id="HostDB:ENSMUSG00000036353"/>
<dbReference type="eggNOG" id="ENOG502QUS2">
    <property type="taxonomic scope" value="Eukaryota"/>
</dbReference>
<dbReference type="GeneTree" id="ENSGT01110000267167"/>
<dbReference type="InParanoid" id="Q9CPV9"/>
<dbReference type="OMA" id="FVCQVTQ"/>
<dbReference type="OrthoDB" id="6163051at2759"/>
<dbReference type="PhylomeDB" id="Q9CPV9"/>
<dbReference type="TreeFam" id="TF330969"/>
<dbReference type="Reactome" id="R-MMU-392170">
    <property type="pathway name" value="ADP signalling through P2Y purinoceptor 12"/>
</dbReference>
<dbReference type="Reactome" id="R-MMU-417957">
    <property type="pathway name" value="P2Y receptors"/>
</dbReference>
<dbReference type="Reactome" id="R-MMU-418594">
    <property type="pathway name" value="G alpha (i) signalling events"/>
</dbReference>
<dbReference type="BioGRID-ORCS" id="70839">
    <property type="hits" value="0 hits in 76 CRISPR screens"/>
</dbReference>
<dbReference type="ChiTaRS" id="P2ry12">
    <property type="organism name" value="mouse"/>
</dbReference>
<dbReference type="PRO" id="PR:Q9CPV9"/>
<dbReference type="Proteomes" id="UP000000589">
    <property type="component" value="Chromosome 3"/>
</dbReference>
<dbReference type="RNAct" id="Q9CPV9">
    <property type="molecule type" value="protein"/>
</dbReference>
<dbReference type="Bgee" id="ENSMUSG00000036353">
    <property type="expression patterns" value="Expressed in globus pallidus and 121 other cell types or tissues"/>
</dbReference>
<dbReference type="ExpressionAtlas" id="Q9CPV9">
    <property type="expression patterns" value="baseline and differential"/>
</dbReference>
<dbReference type="GO" id="GO:0044298">
    <property type="term" value="C:cell body membrane"/>
    <property type="evidence" value="ECO:0000316"/>
    <property type="project" value="ARUK-UCL"/>
</dbReference>
<dbReference type="GO" id="GO:0031253">
    <property type="term" value="C:cell projection membrane"/>
    <property type="evidence" value="ECO:0000316"/>
    <property type="project" value="ARUK-UCL"/>
</dbReference>
<dbReference type="GO" id="GO:0016020">
    <property type="term" value="C:membrane"/>
    <property type="evidence" value="ECO:0000250"/>
    <property type="project" value="UniProtKB"/>
</dbReference>
<dbReference type="GO" id="GO:0005886">
    <property type="term" value="C:plasma membrane"/>
    <property type="evidence" value="ECO:0000314"/>
    <property type="project" value="ParkinsonsUK-UCL"/>
</dbReference>
<dbReference type="GO" id="GO:0001609">
    <property type="term" value="F:G protein-coupled adenosine receptor activity"/>
    <property type="evidence" value="ECO:0000315"/>
    <property type="project" value="MGI"/>
</dbReference>
<dbReference type="GO" id="GO:0001621">
    <property type="term" value="F:G protein-coupled ADP receptor activity"/>
    <property type="evidence" value="ECO:0000315"/>
    <property type="project" value="MGI"/>
</dbReference>
<dbReference type="GO" id="GO:0007193">
    <property type="term" value="P:adenylate cyclase-inhibiting G protein-coupled receptor signaling pathway"/>
    <property type="evidence" value="ECO:0000250"/>
    <property type="project" value="UniProtKB"/>
</dbReference>
<dbReference type="GO" id="GO:0007188">
    <property type="term" value="P:adenylate cyclase-modulating G protein-coupled receptor signaling pathway"/>
    <property type="evidence" value="ECO:0000315"/>
    <property type="project" value="MGI"/>
</dbReference>
<dbReference type="GO" id="GO:0071318">
    <property type="term" value="P:cellular response to ATP"/>
    <property type="evidence" value="ECO:0000315"/>
    <property type="project" value="ParkinsonsUK-UCL"/>
</dbReference>
<dbReference type="GO" id="GO:0051649">
    <property type="term" value="P:establishment of localization in cell"/>
    <property type="evidence" value="ECO:0000316"/>
    <property type="project" value="MGI"/>
</dbReference>
<dbReference type="GO" id="GO:0006811">
    <property type="term" value="P:monoatomic ion transport"/>
    <property type="evidence" value="ECO:0000316"/>
    <property type="project" value="MGI"/>
</dbReference>
<dbReference type="GO" id="GO:0030168">
    <property type="term" value="P:platelet activation"/>
    <property type="evidence" value="ECO:0000315"/>
    <property type="project" value="MGI"/>
</dbReference>
<dbReference type="GO" id="GO:0070527">
    <property type="term" value="P:platelet aggregation"/>
    <property type="evidence" value="ECO:0000250"/>
    <property type="project" value="UniProtKB"/>
</dbReference>
<dbReference type="GO" id="GO:0043270">
    <property type="term" value="P:positive regulation of monoatomic ion transport"/>
    <property type="evidence" value="ECO:0000316"/>
    <property type="project" value="MGI"/>
</dbReference>
<dbReference type="GO" id="GO:1904139">
    <property type="term" value="P:regulation of microglial cell migration"/>
    <property type="evidence" value="ECO:0000314"/>
    <property type="project" value="ParkinsonsUK-UCL"/>
</dbReference>
<dbReference type="GO" id="GO:0006930">
    <property type="term" value="P:substrate-dependent cell migration, cell extension"/>
    <property type="evidence" value="ECO:0000315"/>
    <property type="project" value="ParkinsonsUK-UCL"/>
</dbReference>
<dbReference type="GO" id="GO:0150063">
    <property type="term" value="P:visual system development"/>
    <property type="evidence" value="ECO:0000316"/>
    <property type="project" value="ARUK-UCL"/>
</dbReference>
<dbReference type="CDD" id="cd15150">
    <property type="entry name" value="7tmA_P2Y12"/>
    <property type="match status" value="1"/>
</dbReference>
<dbReference type="FunFam" id="1.20.1070.10:FF:000049">
    <property type="entry name" value="G-protein coupled receptor 87"/>
    <property type="match status" value="1"/>
</dbReference>
<dbReference type="Gene3D" id="1.20.1070.10">
    <property type="entry name" value="Rhodopsin 7-helix transmembrane proteins"/>
    <property type="match status" value="1"/>
</dbReference>
<dbReference type="InterPro" id="IPR000276">
    <property type="entry name" value="GPCR_Rhodpsn"/>
</dbReference>
<dbReference type="InterPro" id="IPR017452">
    <property type="entry name" value="GPCR_Rhodpsn_7TM"/>
</dbReference>
<dbReference type="InterPro" id="IPR005394">
    <property type="entry name" value="P2Y12_rcpt"/>
</dbReference>
<dbReference type="PANTHER" id="PTHR24233:SF0">
    <property type="entry name" value="P2Y PURINOCEPTOR 12"/>
    <property type="match status" value="1"/>
</dbReference>
<dbReference type="PANTHER" id="PTHR24233">
    <property type="entry name" value="P2Y PURINOCEPTOR-RELATED G-PROTEIN COUPLED RECEPTOR"/>
    <property type="match status" value="1"/>
</dbReference>
<dbReference type="Pfam" id="PF00001">
    <property type="entry name" value="7tm_1"/>
    <property type="match status" value="1"/>
</dbReference>
<dbReference type="PRINTS" id="PR00237">
    <property type="entry name" value="GPCRRHODOPSN"/>
</dbReference>
<dbReference type="PRINTS" id="PR01569">
    <property type="entry name" value="P2Y12PRNCPTR"/>
</dbReference>
<dbReference type="PRINTS" id="PR01157">
    <property type="entry name" value="P2YPURNOCPTR"/>
</dbReference>
<dbReference type="SUPFAM" id="SSF81321">
    <property type="entry name" value="Family A G protein-coupled receptor-like"/>
    <property type="match status" value="1"/>
</dbReference>
<dbReference type="PROSITE" id="PS50262">
    <property type="entry name" value="G_PROTEIN_RECEP_F1_2"/>
    <property type="match status" value="1"/>
</dbReference>
<gene>
    <name type="primary">P2ry12</name>
</gene>
<keyword id="KW-0094">Blood coagulation</keyword>
<keyword id="KW-1003">Cell membrane</keyword>
<keyword id="KW-1015">Disulfide bond</keyword>
<keyword id="KW-0297">G-protein coupled receptor</keyword>
<keyword id="KW-0325">Glycoprotein</keyword>
<keyword id="KW-0356">Hemostasis</keyword>
<keyword id="KW-0472">Membrane</keyword>
<keyword id="KW-0597">Phosphoprotein</keyword>
<keyword id="KW-0675">Receptor</keyword>
<keyword id="KW-1185">Reference proteome</keyword>
<keyword id="KW-0807">Transducer</keyword>
<keyword id="KW-0812">Transmembrane</keyword>
<keyword id="KW-1133">Transmembrane helix</keyword>